<evidence type="ECO:0000255" key="1">
    <source>
        <dbReference type="PROSITE-ProRule" id="PRU00176"/>
    </source>
</evidence>
<evidence type="ECO:0000256" key="2">
    <source>
        <dbReference type="SAM" id="MobiDB-lite"/>
    </source>
</evidence>
<evidence type="ECO:0000269" key="3">
    <source>
    </source>
</evidence>
<comment type="subcellular location">
    <subcellularLocation>
        <location evidence="3">Nucleus</location>
        <location evidence="3">Nucleolus</location>
    </subcellularLocation>
</comment>
<feature type="chain" id="PRO_0000310811" description="Uncharacterized RNA-binding protein C365.04c">
    <location>
        <begin position="1"/>
        <end position="233"/>
    </location>
</feature>
<feature type="domain" description="RRM" evidence="1">
    <location>
        <begin position="92"/>
        <end position="171"/>
    </location>
</feature>
<feature type="region of interest" description="Disordered" evidence="2">
    <location>
        <begin position="1"/>
        <end position="90"/>
    </location>
</feature>
<feature type="region of interest" description="Disordered" evidence="2">
    <location>
        <begin position="194"/>
        <end position="233"/>
    </location>
</feature>
<feature type="compositionally biased region" description="Basic residues" evidence="2">
    <location>
        <begin position="1"/>
        <end position="10"/>
    </location>
</feature>
<feature type="compositionally biased region" description="Basic and acidic residues" evidence="2">
    <location>
        <begin position="11"/>
        <end position="56"/>
    </location>
</feature>
<feature type="compositionally biased region" description="Basic residues" evidence="2">
    <location>
        <begin position="76"/>
        <end position="85"/>
    </location>
</feature>
<feature type="compositionally biased region" description="Basic and acidic residues" evidence="2">
    <location>
        <begin position="194"/>
        <end position="216"/>
    </location>
</feature>
<feature type="compositionally biased region" description="Basic and acidic residues" evidence="2">
    <location>
        <begin position="224"/>
        <end position="233"/>
    </location>
</feature>
<name>YGR4_SCHPO</name>
<sequence length="233" mass="26810">MSSKLSKKKLKSLEYRSKKFDKKSQSLEEHEKKVQQKNEELEKKAADKISRDELPEKQLAQSNDKDKHSVSNPPHKTLKSKRQKGKNNDRKVILFVGNLPKDSSVETLQLHFKRAGQVPSVRIPTDKTSGRQKGYAFVEFINPKTDVISKALKFHHTIYKERKINIELTAGGGGKTEARMNKIKEKNRKWKEEMRQRVASEEQQAGEEKMARKAVADEGLESGIHPDRLRLLQ</sequence>
<dbReference type="EMBL" id="CU329671">
    <property type="protein sequence ID" value="CAB44756.1"/>
    <property type="molecule type" value="Genomic_DNA"/>
</dbReference>
<dbReference type="PIR" id="T40311">
    <property type="entry name" value="T40311"/>
</dbReference>
<dbReference type="RefSeq" id="NP_596033.1">
    <property type="nucleotide sequence ID" value="NM_001021943.2"/>
</dbReference>
<dbReference type="SMR" id="Q9Y7Y3"/>
<dbReference type="BioGRID" id="277440">
    <property type="interactions" value="3"/>
</dbReference>
<dbReference type="FunCoup" id="Q9Y7Y3">
    <property type="interactions" value="196"/>
</dbReference>
<dbReference type="STRING" id="284812.Q9Y7Y3"/>
<dbReference type="iPTMnet" id="Q9Y7Y3"/>
<dbReference type="PaxDb" id="4896-SPBC365.04c.1"/>
<dbReference type="EnsemblFungi" id="SPBC365.04c.1">
    <property type="protein sequence ID" value="SPBC365.04c.1:pep"/>
    <property type="gene ID" value="SPBC365.04c"/>
</dbReference>
<dbReference type="KEGG" id="spo:2540924"/>
<dbReference type="PomBase" id="SPBC365.04c"/>
<dbReference type="VEuPathDB" id="FungiDB:SPBC365.04c"/>
<dbReference type="eggNOG" id="KOG0118">
    <property type="taxonomic scope" value="Eukaryota"/>
</dbReference>
<dbReference type="HOGENOM" id="CLU_037639_2_0_1"/>
<dbReference type="InParanoid" id="Q9Y7Y3"/>
<dbReference type="OMA" id="NIQRRMD"/>
<dbReference type="PhylomeDB" id="Q9Y7Y3"/>
<dbReference type="PRO" id="PR:Q9Y7Y3"/>
<dbReference type="Proteomes" id="UP000002485">
    <property type="component" value="Chromosome II"/>
</dbReference>
<dbReference type="GO" id="GO:0005730">
    <property type="term" value="C:nucleolus"/>
    <property type="evidence" value="ECO:0007005"/>
    <property type="project" value="PomBase"/>
</dbReference>
<dbReference type="GO" id="GO:0005634">
    <property type="term" value="C:nucleus"/>
    <property type="evidence" value="ECO:0007005"/>
    <property type="project" value="PomBase"/>
</dbReference>
<dbReference type="GO" id="GO:0043024">
    <property type="term" value="F:ribosomal small subunit binding"/>
    <property type="evidence" value="ECO:0000318"/>
    <property type="project" value="GO_Central"/>
</dbReference>
<dbReference type="GO" id="GO:0033592">
    <property type="term" value="F:RNA strand annealing activity"/>
    <property type="evidence" value="ECO:0000318"/>
    <property type="project" value="GO_Central"/>
</dbReference>
<dbReference type="GO" id="GO:0034057">
    <property type="term" value="F:RNA strand-exchange activity"/>
    <property type="evidence" value="ECO:0000318"/>
    <property type="project" value="GO_Central"/>
</dbReference>
<dbReference type="GO" id="GO:0019843">
    <property type="term" value="F:rRNA binding"/>
    <property type="evidence" value="ECO:0000318"/>
    <property type="project" value="GO_Central"/>
</dbReference>
<dbReference type="GO" id="GO:0097010">
    <property type="term" value="P:eukaryotic translation initiation factor 4F complex assembly"/>
    <property type="evidence" value="ECO:0000318"/>
    <property type="project" value="GO_Central"/>
</dbReference>
<dbReference type="GO" id="GO:0001731">
    <property type="term" value="P:formation of translation preinitiation complex"/>
    <property type="evidence" value="ECO:0000318"/>
    <property type="project" value="GO_Central"/>
</dbReference>
<dbReference type="GO" id="GO:0042274">
    <property type="term" value="P:ribosomal small subunit biogenesis"/>
    <property type="evidence" value="ECO:0000318"/>
    <property type="project" value="GO_Central"/>
</dbReference>
<dbReference type="CDD" id="cd12400">
    <property type="entry name" value="RRM_Nop6"/>
    <property type="match status" value="1"/>
</dbReference>
<dbReference type="Gene3D" id="3.30.70.330">
    <property type="match status" value="1"/>
</dbReference>
<dbReference type="InterPro" id="IPR034228">
    <property type="entry name" value="Nop6_RRM"/>
</dbReference>
<dbReference type="InterPro" id="IPR012677">
    <property type="entry name" value="Nucleotide-bd_a/b_plait_sf"/>
</dbReference>
<dbReference type="InterPro" id="IPR035979">
    <property type="entry name" value="RBD_domain_sf"/>
</dbReference>
<dbReference type="InterPro" id="IPR000504">
    <property type="entry name" value="RRM_dom"/>
</dbReference>
<dbReference type="PANTHER" id="PTHR23236">
    <property type="entry name" value="EUKARYOTIC TRANSLATION INITIATION FACTOR 4B/4H"/>
    <property type="match status" value="1"/>
</dbReference>
<dbReference type="PANTHER" id="PTHR23236:SF51">
    <property type="entry name" value="NUCLEOLAR PROTEIN 6"/>
    <property type="match status" value="1"/>
</dbReference>
<dbReference type="Pfam" id="PF00076">
    <property type="entry name" value="RRM_1"/>
    <property type="match status" value="1"/>
</dbReference>
<dbReference type="SMART" id="SM00360">
    <property type="entry name" value="RRM"/>
    <property type="match status" value="1"/>
</dbReference>
<dbReference type="SUPFAM" id="SSF54928">
    <property type="entry name" value="RNA-binding domain, RBD"/>
    <property type="match status" value="1"/>
</dbReference>
<dbReference type="PROSITE" id="PS50102">
    <property type="entry name" value="RRM"/>
    <property type="match status" value="1"/>
</dbReference>
<keyword id="KW-0539">Nucleus</keyword>
<keyword id="KW-1185">Reference proteome</keyword>
<keyword id="KW-0694">RNA-binding</keyword>
<reference key="1">
    <citation type="journal article" date="2002" name="Nature">
        <title>The genome sequence of Schizosaccharomyces pombe.</title>
        <authorList>
            <person name="Wood V."/>
            <person name="Gwilliam R."/>
            <person name="Rajandream M.A."/>
            <person name="Lyne M.H."/>
            <person name="Lyne R."/>
            <person name="Stewart A."/>
            <person name="Sgouros J.G."/>
            <person name="Peat N."/>
            <person name="Hayles J."/>
            <person name="Baker S.G."/>
            <person name="Basham D."/>
            <person name="Bowman S."/>
            <person name="Brooks K."/>
            <person name="Brown D."/>
            <person name="Brown S."/>
            <person name="Chillingworth T."/>
            <person name="Churcher C.M."/>
            <person name="Collins M."/>
            <person name="Connor R."/>
            <person name="Cronin A."/>
            <person name="Davis P."/>
            <person name="Feltwell T."/>
            <person name="Fraser A."/>
            <person name="Gentles S."/>
            <person name="Goble A."/>
            <person name="Hamlin N."/>
            <person name="Harris D.E."/>
            <person name="Hidalgo J."/>
            <person name="Hodgson G."/>
            <person name="Holroyd S."/>
            <person name="Hornsby T."/>
            <person name="Howarth S."/>
            <person name="Huckle E.J."/>
            <person name="Hunt S."/>
            <person name="Jagels K."/>
            <person name="James K.D."/>
            <person name="Jones L."/>
            <person name="Jones M."/>
            <person name="Leather S."/>
            <person name="McDonald S."/>
            <person name="McLean J."/>
            <person name="Mooney P."/>
            <person name="Moule S."/>
            <person name="Mungall K.L."/>
            <person name="Murphy L.D."/>
            <person name="Niblett D."/>
            <person name="Odell C."/>
            <person name="Oliver K."/>
            <person name="O'Neil S."/>
            <person name="Pearson D."/>
            <person name="Quail M.A."/>
            <person name="Rabbinowitsch E."/>
            <person name="Rutherford K.M."/>
            <person name="Rutter S."/>
            <person name="Saunders D."/>
            <person name="Seeger K."/>
            <person name="Sharp S."/>
            <person name="Skelton J."/>
            <person name="Simmonds M.N."/>
            <person name="Squares R."/>
            <person name="Squares S."/>
            <person name="Stevens K."/>
            <person name="Taylor K."/>
            <person name="Taylor R.G."/>
            <person name="Tivey A."/>
            <person name="Walsh S.V."/>
            <person name="Warren T."/>
            <person name="Whitehead S."/>
            <person name="Woodward J.R."/>
            <person name="Volckaert G."/>
            <person name="Aert R."/>
            <person name="Robben J."/>
            <person name="Grymonprez B."/>
            <person name="Weltjens I."/>
            <person name="Vanstreels E."/>
            <person name="Rieger M."/>
            <person name="Schaefer M."/>
            <person name="Mueller-Auer S."/>
            <person name="Gabel C."/>
            <person name="Fuchs M."/>
            <person name="Duesterhoeft A."/>
            <person name="Fritzc C."/>
            <person name="Holzer E."/>
            <person name="Moestl D."/>
            <person name="Hilbert H."/>
            <person name="Borzym K."/>
            <person name="Langer I."/>
            <person name="Beck A."/>
            <person name="Lehrach H."/>
            <person name="Reinhardt R."/>
            <person name="Pohl T.M."/>
            <person name="Eger P."/>
            <person name="Zimmermann W."/>
            <person name="Wedler H."/>
            <person name="Wambutt R."/>
            <person name="Purnelle B."/>
            <person name="Goffeau A."/>
            <person name="Cadieu E."/>
            <person name="Dreano S."/>
            <person name="Gloux S."/>
            <person name="Lelaure V."/>
            <person name="Mottier S."/>
            <person name="Galibert F."/>
            <person name="Aves S.J."/>
            <person name="Xiang Z."/>
            <person name="Hunt C."/>
            <person name="Moore K."/>
            <person name="Hurst S.M."/>
            <person name="Lucas M."/>
            <person name="Rochet M."/>
            <person name="Gaillardin C."/>
            <person name="Tallada V.A."/>
            <person name="Garzon A."/>
            <person name="Thode G."/>
            <person name="Daga R.R."/>
            <person name="Cruzado L."/>
            <person name="Jimenez J."/>
            <person name="Sanchez M."/>
            <person name="del Rey F."/>
            <person name="Benito J."/>
            <person name="Dominguez A."/>
            <person name="Revuelta J.L."/>
            <person name="Moreno S."/>
            <person name="Armstrong J."/>
            <person name="Forsburg S.L."/>
            <person name="Cerutti L."/>
            <person name="Lowe T."/>
            <person name="McCombie W.R."/>
            <person name="Paulsen I."/>
            <person name="Potashkin J."/>
            <person name="Shpakovski G.V."/>
            <person name="Ussery D."/>
            <person name="Barrell B.G."/>
            <person name="Nurse P."/>
        </authorList>
    </citation>
    <scope>NUCLEOTIDE SEQUENCE [LARGE SCALE GENOMIC DNA]</scope>
    <source>
        <strain>972 / ATCC 24843</strain>
    </source>
</reference>
<reference key="2">
    <citation type="journal article" date="2006" name="Nat. Biotechnol.">
        <title>ORFeome cloning and global analysis of protein localization in the fission yeast Schizosaccharomyces pombe.</title>
        <authorList>
            <person name="Matsuyama A."/>
            <person name="Arai R."/>
            <person name="Yashiroda Y."/>
            <person name="Shirai A."/>
            <person name="Kamata A."/>
            <person name="Sekido S."/>
            <person name="Kobayashi Y."/>
            <person name="Hashimoto A."/>
            <person name="Hamamoto M."/>
            <person name="Hiraoka Y."/>
            <person name="Horinouchi S."/>
            <person name="Yoshida M."/>
        </authorList>
    </citation>
    <scope>SUBCELLULAR LOCATION [LARGE SCALE ANALYSIS]</scope>
</reference>
<organism>
    <name type="scientific">Schizosaccharomyces pombe (strain 972 / ATCC 24843)</name>
    <name type="common">Fission yeast</name>
    <dbReference type="NCBI Taxonomy" id="284812"/>
    <lineage>
        <taxon>Eukaryota</taxon>
        <taxon>Fungi</taxon>
        <taxon>Dikarya</taxon>
        <taxon>Ascomycota</taxon>
        <taxon>Taphrinomycotina</taxon>
        <taxon>Schizosaccharomycetes</taxon>
        <taxon>Schizosaccharomycetales</taxon>
        <taxon>Schizosaccharomycetaceae</taxon>
        <taxon>Schizosaccharomyces</taxon>
    </lineage>
</organism>
<accession>Q9Y7Y3</accession>
<proteinExistence type="predicted"/>
<protein>
    <recommendedName>
        <fullName>Uncharacterized RNA-binding protein C365.04c</fullName>
    </recommendedName>
</protein>
<gene>
    <name type="ORF">SPBC365.04c</name>
</gene>